<gene>
    <name evidence="1" type="primary">rnz</name>
    <name type="ordered locus">BbuZS7_0782</name>
</gene>
<protein>
    <recommendedName>
        <fullName evidence="1">Ribonuclease Z</fullName>
        <shortName evidence="1">RNase Z</shortName>
        <ecNumber evidence="1">3.1.26.11</ecNumber>
    </recommendedName>
    <alternativeName>
        <fullName evidence="1">tRNA 3 endonuclease</fullName>
    </alternativeName>
    <alternativeName>
        <fullName evidence="1">tRNase Z</fullName>
    </alternativeName>
</protein>
<proteinExistence type="inferred from homology"/>
<evidence type="ECO:0000255" key="1">
    <source>
        <dbReference type="HAMAP-Rule" id="MF_01818"/>
    </source>
</evidence>
<name>RNZ_BORBZ</name>
<sequence>MGFNINIIGTGGTRPLHNRYLSSVLIEYDGDNFLFDCGEGTQMSLRKQKISWQKIKMICITHLHADHITGLLGIVMLMSQSGETRKEPLIIAGPVGIKNYTQANINMLKIYKNYEIIYKEIIIDKTEKIIYEDKTKKIEYTKLKHSIECVGYLFIEKDKPGKFNTEKAEELNIPKGPIRKALQDGKEILVNGKIIKPSEILGKSKKGLKVAYITDTGYFKELIQQIKNFNLVIIESTFKNELKKEADKKLHLTAGGAANIVKQAKVLQTGLIHFSERYTLRKDLENLLKEAKLEHPDGEIFLTRDGMRLEANKNNFIIK</sequence>
<reference key="1">
    <citation type="journal article" date="2011" name="J. Bacteriol.">
        <title>Whole-genome sequences of thirteen isolates of Borrelia burgdorferi.</title>
        <authorList>
            <person name="Schutzer S.E."/>
            <person name="Fraser-Liggett C.M."/>
            <person name="Casjens S.R."/>
            <person name="Qiu W.G."/>
            <person name="Dunn J.J."/>
            <person name="Mongodin E.F."/>
            <person name="Luft B.J."/>
        </authorList>
    </citation>
    <scope>NUCLEOTIDE SEQUENCE [LARGE SCALE GENOMIC DNA]</scope>
    <source>
        <strain>ZS7</strain>
    </source>
</reference>
<organism>
    <name type="scientific">Borreliella burgdorferi (strain ZS7)</name>
    <name type="common">Borrelia burgdorferi</name>
    <dbReference type="NCBI Taxonomy" id="445985"/>
    <lineage>
        <taxon>Bacteria</taxon>
        <taxon>Pseudomonadati</taxon>
        <taxon>Spirochaetota</taxon>
        <taxon>Spirochaetia</taxon>
        <taxon>Spirochaetales</taxon>
        <taxon>Borreliaceae</taxon>
        <taxon>Borreliella</taxon>
    </lineage>
</organism>
<comment type="function">
    <text evidence="1">Zinc phosphodiesterase, which displays some tRNA 3'-processing endonuclease activity. Probably involved in tRNA maturation, by removing a 3'-trailer from precursor tRNA.</text>
</comment>
<comment type="catalytic activity">
    <reaction evidence="1">
        <text>Endonucleolytic cleavage of RNA, removing extra 3' nucleotides from tRNA precursor, generating 3' termini of tRNAs. A 3'-hydroxy group is left at the tRNA terminus and a 5'-phosphoryl group is left at the trailer molecule.</text>
        <dbReference type="EC" id="3.1.26.11"/>
    </reaction>
</comment>
<comment type="cofactor">
    <cofactor evidence="1">
        <name>Zn(2+)</name>
        <dbReference type="ChEBI" id="CHEBI:29105"/>
    </cofactor>
    <text evidence="1">Binds 2 Zn(2+) ions.</text>
</comment>
<comment type="subunit">
    <text evidence="1">Homodimer.</text>
</comment>
<comment type="similarity">
    <text evidence="1">Belongs to the RNase Z family.</text>
</comment>
<accession>B7J0K1</accession>
<keyword id="KW-0255">Endonuclease</keyword>
<keyword id="KW-0378">Hydrolase</keyword>
<keyword id="KW-0479">Metal-binding</keyword>
<keyword id="KW-0540">Nuclease</keyword>
<keyword id="KW-0819">tRNA processing</keyword>
<keyword id="KW-0862">Zinc</keyword>
<feature type="chain" id="PRO_1000187937" description="Ribonuclease Z">
    <location>
        <begin position="1"/>
        <end position="319"/>
    </location>
</feature>
<feature type="active site" description="Proton acceptor" evidence="1">
    <location>
        <position position="66"/>
    </location>
</feature>
<feature type="binding site" evidence="1">
    <location>
        <position position="62"/>
    </location>
    <ligand>
        <name>Zn(2+)</name>
        <dbReference type="ChEBI" id="CHEBI:29105"/>
        <label>1</label>
        <note>catalytic</note>
    </ligand>
</feature>
<feature type="binding site" evidence="1">
    <location>
        <position position="64"/>
    </location>
    <ligand>
        <name>Zn(2+)</name>
        <dbReference type="ChEBI" id="CHEBI:29105"/>
        <label>1</label>
        <note>catalytic</note>
    </ligand>
</feature>
<feature type="binding site" evidence="1">
    <location>
        <position position="66"/>
    </location>
    <ligand>
        <name>Zn(2+)</name>
        <dbReference type="ChEBI" id="CHEBI:29105"/>
        <label>2</label>
        <note>catalytic</note>
    </ligand>
</feature>
<feature type="binding site" evidence="1">
    <location>
        <position position="67"/>
    </location>
    <ligand>
        <name>Zn(2+)</name>
        <dbReference type="ChEBI" id="CHEBI:29105"/>
        <label>2</label>
        <note>catalytic</note>
    </ligand>
</feature>
<feature type="binding site" evidence="1">
    <location>
        <position position="145"/>
    </location>
    <ligand>
        <name>Zn(2+)</name>
        <dbReference type="ChEBI" id="CHEBI:29105"/>
        <label>1</label>
        <note>catalytic</note>
    </ligand>
</feature>
<feature type="binding site" evidence="1">
    <location>
        <position position="215"/>
    </location>
    <ligand>
        <name>Zn(2+)</name>
        <dbReference type="ChEBI" id="CHEBI:29105"/>
        <label>1</label>
        <note>catalytic</note>
    </ligand>
</feature>
<feature type="binding site" evidence="1">
    <location>
        <position position="215"/>
    </location>
    <ligand>
        <name>Zn(2+)</name>
        <dbReference type="ChEBI" id="CHEBI:29105"/>
        <label>2</label>
        <note>catalytic</note>
    </ligand>
</feature>
<feature type="binding site" evidence="1">
    <location>
        <position position="273"/>
    </location>
    <ligand>
        <name>Zn(2+)</name>
        <dbReference type="ChEBI" id="CHEBI:29105"/>
        <label>2</label>
        <note>catalytic</note>
    </ligand>
</feature>
<dbReference type="EC" id="3.1.26.11" evidence="1"/>
<dbReference type="EMBL" id="CP001205">
    <property type="protein sequence ID" value="ACK75060.1"/>
    <property type="molecule type" value="Genomic_DNA"/>
</dbReference>
<dbReference type="RefSeq" id="WP_002657513.1">
    <property type="nucleotide sequence ID" value="NC_011728.1"/>
</dbReference>
<dbReference type="SMR" id="B7J0K1"/>
<dbReference type="GeneID" id="56567565"/>
<dbReference type="KEGG" id="bbz:BbuZS7_0782"/>
<dbReference type="HOGENOM" id="CLU_031317_2_1_12"/>
<dbReference type="Proteomes" id="UP000006901">
    <property type="component" value="Chromosome"/>
</dbReference>
<dbReference type="GO" id="GO:0042781">
    <property type="term" value="F:3'-tRNA processing endoribonuclease activity"/>
    <property type="evidence" value="ECO:0007669"/>
    <property type="project" value="UniProtKB-UniRule"/>
</dbReference>
<dbReference type="GO" id="GO:0008270">
    <property type="term" value="F:zinc ion binding"/>
    <property type="evidence" value="ECO:0007669"/>
    <property type="project" value="UniProtKB-UniRule"/>
</dbReference>
<dbReference type="CDD" id="cd07717">
    <property type="entry name" value="RNaseZ_ZiPD-like_MBL-fold"/>
    <property type="match status" value="1"/>
</dbReference>
<dbReference type="Gene3D" id="3.60.15.10">
    <property type="entry name" value="Ribonuclease Z/Hydroxyacylglutathione hydrolase-like"/>
    <property type="match status" value="1"/>
</dbReference>
<dbReference type="HAMAP" id="MF_01818">
    <property type="entry name" value="RNase_Z_BN"/>
    <property type="match status" value="1"/>
</dbReference>
<dbReference type="InterPro" id="IPR001279">
    <property type="entry name" value="Metallo-B-lactamas"/>
</dbReference>
<dbReference type="InterPro" id="IPR036866">
    <property type="entry name" value="RibonucZ/Hydroxyglut_hydro"/>
</dbReference>
<dbReference type="InterPro" id="IPR013471">
    <property type="entry name" value="RNase_Z/BN"/>
</dbReference>
<dbReference type="NCBIfam" id="NF000801">
    <property type="entry name" value="PRK00055.1-3"/>
    <property type="match status" value="1"/>
</dbReference>
<dbReference type="NCBIfam" id="TIGR02651">
    <property type="entry name" value="RNase_Z"/>
    <property type="match status" value="1"/>
</dbReference>
<dbReference type="PANTHER" id="PTHR46018">
    <property type="entry name" value="ZINC PHOSPHODIESTERASE ELAC PROTEIN 1"/>
    <property type="match status" value="1"/>
</dbReference>
<dbReference type="PANTHER" id="PTHR46018:SF2">
    <property type="entry name" value="ZINC PHOSPHODIESTERASE ELAC PROTEIN 1"/>
    <property type="match status" value="1"/>
</dbReference>
<dbReference type="Pfam" id="PF00753">
    <property type="entry name" value="Lactamase_B"/>
    <property type="match status" value="1"/>
</dbReference>
<dbReference type="Pfam" id="PF12706">
    <property type="entry name" value="Lactamase_B_2"/>
    <property type="match status" value="1"/>
</dbReference>
<dbReference type="SMART" id="SM00849">
    <property type="entry name" value="Lactamase_B"/>
    <property type="match status" value="1"/>
</dbReference>
<dbReference type="SUPFAM" id="SSF56281">
    <property type="entry name" value="Metallo-hydrolase/oxidoreductase"/>
    <property type="match status" value="1"/>
</dbReference>